<protein>
    <recommendedName>
        <fullName evidence="1">RNA-free ribonuclease P</fullName>
        <shortName evidence="1">RNA-free RNase P</shortName>
        <ecNumber evidence="1">3.1.26.5</ecNumber>
    </recommendedName>
    <alternativeName>
        <fullName evidence="1">Protein-only RNase P</fullName>
    </alternativeName>
</protein>
<dbReference type="EC" id="3.1.26.5" evidence="1"/>
<dbReference type="EMBL" id="CP000099">
    <property type="protein sequence ID" value="AAZ70801.1"/>
    <property type="molecule type" value="Genomic_DNA"/>
</dbReference>
<dbReference type="SMR" id="Q46BE1"/>
<dbReference type="STRING" id="269797.Mbar_A1861"/>
<dbReference type="PaxDb" id="269797-Mbar_A1861"/>
<dbReference type="KEGG" id="mba:Mbar_A1861"/>
<dbReference type="eggNOG" id="arCOG00720">
    <property type="taxonomic scope" value="Archaea"/>
</dbReference>
<dbReference type="HOGENOM" id="CLU_109672_0_0_2"/>
<dbReference type="OrthoDB" id="95197at2157"/>
<dbReference type="GO" id="GO:0004526">
    <property type="term" value="F:ribonuclease P activity"/>
    <property type="evidence" value="ECO:0007669"/>
    <property type="project" value="UniProtKB-UniRule"/>
</dbReference>
<dbReference type="GO" id="GO:0001682">
    <property type="term" value="P:tRNA 5'-leader removal"/>
    <property type="evidence" value="ECO:0007669"/>
    <property type="project" value="UniProtKB-UniRule"/>
</dbReference>
<dbReference type="CDD" id="cd18691">
    <property type="entry name" value="PIN_VapC-like"/>
    <property type="match status" value="1"/>
</dbReference>
<dbReference type="HAMAP" id="MF_01078">
    <property type="entry name" value="RNA_free_RNase_P"/>
    <property type="match status" value="1"/>
</dbReference>
<dbReference type="InterPro" id="IPR014856">
    <property type="entry name" value="RNA_free_RNase_P"/>
</dbReference>
<dbReference type="NCBIfam" id="NF003343">
    <property type="entry name" value="PRK04358.1-4"/>
    <property type="match status" value="1"/>
</dbReference>
<dbReference type="NCBIfam" id="TIGR03875">
    <property type="entry name" value="RNA_lig_partner"/>
    <property type="match status" value="1"/>
</dbReference>
<dbReference type="PANTHER" id="PTHR41173:SF1">
    <property type="entry name" value="RNA-FREE RIBONUCLEASE P"/>
    <property type="match status" value="1"/>
</dbReference>
<dbReference type="PANTHER" id="PTHR41173">
    <property type="entry name" value="UPF0278 PROTEIN TK1425"/>
    <property type="match status" value="1"/>
</dbReference>
<dbReference type="Pfam" id="PF08745">
    <property type="entry name" value="PIN_5"/>
    <property type="match status" value="1"/>
</dbReference>
<gene>
    <name type="ordered locus">Mbar_A1861</name>
</gene>
<evidence type="ECO:0000255" key="1">
    <source>
        <dbReference type="HAMAP-Rule" id="MF_01078"/>
    </source>
</evidence>
<evidence type="ECO:0000256" key="2">
    <source>
        <dbReference type="SAM" id="MobiDB-lite"/>
    </source>
</evidence>
<name>RFRNP_METBF</name>
<sequence length="249" mass="28667">MLKQRFVLDTTALTDLQTREVMGYASLCEGMKAILDLIADARLHFGISCYVPYPSVYKEMYEFASRNGCDREVVAKIDTWLVKKSPDRYRVSVTSQIFHEYVAYMRERINRGMGVAEDAIWEAATECLFMENPQNKKKEYKEEVEREVIGGIIGKFRNKYRAALRYGILDSAPDIDVLILAKELDAAVIASDYGIEKWAEQLGVRFVPANVFPMMIQEYLKHLPENENEPEYENRDKSKEGSSGEIEFI</sequence>
<keyword id="KW-0255">Endonuclease</keyword>
<keyword id="KW-0378">Hydrolase</keyword>
<keyword id="KW-0540">Nuclease</keyword>
<keyword id="KW-0819">tRNA processing</keyword>
<reference key="1">
    <citation type="journal article" date="2006" name="J. Bacteriol.">
        <title>The Methanosarcina barkeri genome: comparative analysis with Methanosarcina acetivorans and Methanosarcina mazei reveals extensive rearrangement within methanosarcinal genomes.</title>
        <authorList>
            <person name="Maeder D.L."/>
            <person name="Anderson I."/>
            <person name="Brettin T.S."/>
            <person name="Bruce D.C."/>
            <person name="Gilna P."/>
            <person name="Han C.S."/>
            <person name="Lapidus A."/>
            <person name="Metcalf W.W."/>
            <person name="Saunders E."/>
            <person name="Tapia R."/>
            <person name="Sowers K.R."/>
        </authorList>
    </citation>
    <scope>NUCLEOTIDE SEQUENCE [LARGE SCALE GENOMIC DNA]</scope>
    <source>
        <strain>Fusaro / DSM 804</strain>
    </source>
</reference>
<organism>
    <name type="scientific">Methanosarcina barkeri (strain Fusaro / DSM 804)</name>
    <dbReference type="NCBI Taxonomy" id="269797"/>
    <lineage>
        <taxon>Archaea</taxon>
        <taxon>Methanobacteriati</taxon>
        <taxon>Methanobacteriota</taxon>
        <taxon>Stenosarchaea group</taxon>
        <taxon>Methanomicrobia</taxon>
        <taxon>Methanosarcinales</taxon>
        <taxon>Methanosarcinaceae</taxon>
        <taxon>Methanosarcina</taxon>
    </lineage>
</organism>
<accession>Q46BE1</accession>
<comment type="function">
    <text evidence="1">RNA-free RNase P that catalyzes the removal of the 5'-leader sequence from pre-tRNA to produce the mature 5'-terminus.</text>
</comment>
<comment type="catalytic activity">
    <reaction evidence="1">
        <text>Endonucleolytic cleavage of RNA, removing 5'-extranucleotides from tRNA precursor.</text>
        <dbReference type="EC" id="3.1.26.5"/>
    </reaction>
</comment>
<comment type="similarity">
    <text evidence="1">Belongs to the HARP family.</text>
</comment>
<proteinExistence type="inferred from homology"/>
<feature type="chain" id="PRO_0000366695" description="RNA-free ribonuclease P">
    <location>
        <begin position="1"/>
        <end position="249"/>
    </location>
</feature>
<feature type="region of interest" description="Disordered" evidence="2">
    <location>
        <begin position="226"/>
        <end position="249"/>
    </location>
</feature>
<feature type="compositionally biased region" description="Basic and acidic residues" evidence="2">
    <location>
        <begin position="232"/>
        <end position="242"/>
    </location>
</feature>